<gene>
    <name evidence="1" type="primary">atpF</name>
    <name type="ordered locus">SGO_1546</name>
</gene>
<proteinExistence type="inferred from homology"/>
<accession>A8AYG5</accession>
<protein>
    <recommendedName>
        <fullName evidence="1">ATP synthase subunit b</fullName>
    </recommendedName>
    <alternativeName>
        <fullName evidence="1">ATP synthase F(0) sector subunit b</fullName>
    </alternativeName>
    <alternativeName>
        <fullName evidence="1">ATPase subunit I</fullName>
    </alternativeName>
    <alternativeName>
        <fullName evidence="1">F-type ATPase subunit b</fullName>
        <shortName evidence="1">F-ATPase subunit b</shortName>
    </alternativeName>
</protein>
<reference key="1">
    <citation type="journal article" date="2007" name="J. Bacteriol.">
        <title>Genome-wide transcriptional changes in Streptococcus gordonii in response to competence signaling peptide.</title>
        <authorList>
            <person name="Vickerman M.M."/>
            <person name="Iobst S."/>
            <person name="Jesionowski A.M."/>
            <person name="Gill S.R."/>
        </authorList>
    </citation>
    <scope>NUCLEOTIDE SEQUENCE [LARGE SCALE GENOMIC DNA]</scope>
    <source>
        <strain>Challis / ATCC 35105 / BCRC 15272 / CH1 / DL1 / V288</strain>
    </source>
</reference>
<organism>
    <name type="scientific">Streptococcus gordonii (strain Challis / ATCC 35105 / BCRC 15272 / CH1 / DL1 / V288)</name>
    <dbReference type="NCBI Taxonomy" id="467705"/>
    <lineage>
        <taxon>Bacteria</taxon>
        <taxon>Bacillati</taxon>
        <taxon>Bacillota</taxon>
        <taxon>Bacilli</taxon>
        <taxon>Lactobacillales</taxon>
        <taxon>Streptococcaceae</taxon>
        <taxon>Streptococcus</taxon>
    </lineage>
</organism>
<comment type="function">
    <text evidence="1">F(1)F(0) ATP synthase produces ATP from ADP in the presence of a proton or sodium gradient. F-type ATPases consist of two structural domains, F(1) containing the extramembraneous catalytic core and F(0) containing the membrane proton channel, linked together by a central stalk and a peripheral stalk. During catalysis, ATP synthesis in the catalytic domain of F(1) is coupled via a rotary mechanism of the central stalk subunits to proton translocation.</text>
</comment>
<comment type="function">
    <text evidence="1">Component of the F(0) channel, it forms part of the peripheral stalk, linking F(1) to F(0).</text>
</comment>
<comment type="subunit">
    <text evidence="1">F-type ATPases have 2 components, F(1) - the catalytic core - and F(0) - the membrane proton channel. F(1) has five subunits: alpha(3), beta(3), gamma(1), delta(1), epsilon(1). F(0) has three main subunits: a(1), b(2) and c(10-14). The alpha and beta chains form an alternating ring which encloses part of the gamma chain. F(1) is attached to F(0) by a central stalk formed by the gamma and epsilon chains, while a peripheral stalk is formed by the delta and b chains.</text>
</comment>
<comment type="subcellular location">
    <subcellularLocation>
        <location evidence="1">Cell membrane</location>
        <topology evidence="1">Single-pass membrane protein</topology>
    </subcellularLocation>
</comment>
<comment type="similarity">
    <text evidence="1">Belongs to the ATPase B chain family.</text>
</comment>
<name>ATPF_STRGC</name>
<evidence type="ECO:0000255" key="1">
    <source>
        <dbReference type="HAMAP-Rule" id="MF_01398"/>
    </source>
</evidence>
<dbReference type="EMBL" id="CP000725">
    <property type="protein sequence ID" value="ABV09713.1"/>
    <property type="molecule type" value="Genomic_DNA"/>
</dbReference>
<dbReference type="RefSeq" id="WP_008809481.1">
    <property type="nucleotide sequence ID" value="NC_009785.1"/>
</dbReference>
<dbReference type="SMR" id="A8AYG5"/>
<dbReference type="STRING" id="467705.SGO_1546"/>
<dbReference type="KEGG" id="sgo:SGO_1546"/>
<dbReference type="eggNOG" id="COG0711">
    <property type="taxonomic scope" value="Bacteria"/>
</dbReference>
<dbReference type="HOGENOM" id="CLU_079215_4_2_9"/>
<dbReference type="Proteomes" id="UP000001131">
    <property type="component" value="Chromosome"/>
</dbReference>
<dbReference type="GO" id="GO:0005886">
    <property type="term" value="C:plasma membrane"/>
    <property type="evidence" value="ECO:0007669"/>
    <property type="project" value="UniProtKB-SubCell"/>
</dbReference>
<dbReference type="GO" id="GO:0045259">
    <property type="term" value="C:proton-transporting ATP synthase complex"/>
    <property type="evidence" value="ECO:0007669"/>
    <property type="project" value="UniProtKB-KW"/>
</dbReference>
<dbReference type="GO" id="GO:0046933">
    <property type="term" value="F:proton-transporting ATP synthase activity, rotational mechanism"/>
    <property type="evidence" value="ECO:0007669"/>
    <property type="project" value="UniProtKB-UniRule"/>
</dbReference>
<dbReference type="GO" id="GO:0046961">
    <property type="term" value="F:proton-transporting ATPase activity, rotational mechanism"/>
    <property type="evidence" value="ECO:0007669"/>
    <property type="project" value="TreeGrafter"/>
</dbReference>
<dbReference type="CDD" id="cd06503">
    <property type="entry name" value="ATP-synt_Fo_b"/>
    <property type="match status" value="1"/>
</dbReference>
<dbReference type="Gene3D" id="6.10.250.1580">
    <property type="match status" value="1"/>
</dbReference>
<dbReference type="HAMAP" id="MF_01398">
    <property type="entry name" value="ATP_synth_b_bprime"/>
    <property type="match status" value="1"/>
</dbReference>
<dbReference type="InterPro" id="IPR028987">
    <property type="entry name" value="ATP_synth_B-like_membr_sf"/>
</dbReference>
<dbReference type="InterPro" id="IPR002146">
    <property type="entry name" value="ATP_synth_b/b'su_bac/chlpt"/>
</dbReference>
<dbReference type="InterPro" id="IPR005864">
    <property type="entry name" value="ATP_synth_F0_bsu_bac"/>
</dbReference>
<dbReference type="InterPro" id="IPR050059">
    <property type="entry name" value="ATP_synthase_B_chain"/>
</dbReference>
<dbReference type="NCBIfam" id="TIGR01144">
    <property type="entry name" value="ATP_synt_b"/>
    <property type="match status" value="1"/>
</dbReference>
<dbReference type="PANTHER" id="PTHR33445:SF1">
    <property type="entry name" value="ATP SYNTHASE SUBUNIT B"/>
    <property type="match status" value="1"/>
</dbReference>
<dbReference type="PANTHER" id="PTHR33445">
    <property type="entry name" value="ATP SYNTHASE SUBUNIT B', CHLOROPLASTIC"/>
    <property type="match status" value="1"/>
</dbReference>
<dbReference type="Pfam" id="PF00430">
    <property type="entry name" value="ATP-synt_B"/>
    <property type="match status" value="1"/>
</dbReference>
<dbReference type="SUPFAM" id="SSF81573">
    <property type="entry name" value="F1F0 ATP synthase subunit B, membrane domain"/>
    <property type="match status" value="1"/>
</dbReference>
<keyword id="KW-0066">ATP synthesis</keyword>
<keyword id="KW-1003">Cell membrane</keyword>
<keyword id="KW-0138">CF(0)</keyword>
<keyword id="KW-0375">Hydrogen ion transport</keyword>
<keyword id="KW-0406">Ion transport</keyword>
<keyword id="KW-0472">Membrane</keyword>
<keyword id="KW-1185">Reference proteome</keyword>
<keyword id="KW-0812">Transmembrane</keyword>
<keyword id="KW-1133">Transmembrane helix</keyword>
<keyword id="KW-0813">Transport</keyword>
<sequence length="164" mass="17850">MNITIGELIGNFILVAGSFLLLIVLIKKFAWGNITSIFEERAKKISDDIDSAESARKNAEVLEQKREEALAGSREEAATIVETAKETAEKNKASILADTTEEVSRLKQKANQEIAQSKAEALRSIKGDVADLSIDLASKIIGQTLDKEAQSQLIDSYIDKLGDA</sequence>
<feature type="chain" id="PRO_0000368796" description="ATP synthase subunit b">
    <location>
        <begin position="1"/>
        <end position="164"/>
    </location>
</feature>
<feature type="transmembrane region" description="Helical" evidence="1">
    <location>
        <begin position="5"/>
        <end position="25"/>
    </location>
</feature>